<name>PYRB_VIBVU</name>
<reference key="1">
    <citation type="submission" date="2002-12" db="EMBL/GenBank/DDBJ databases">
        <title>Complete genome sequence of Vibrio vulnificus CMCP6.</title>
        <authorList>
            <person name="Rhee J.H."/>
            <person name="Kim S.Y."/>
            <person name="Chung S.S."/>
            <person name="Kim J.J."/>
            <person name="Moon Y.H."/>
            <person name="Jeong H."/>
            <person name="Choy H.E."/>
        </authorList>
    </citation>
    <scope>NUCLEOTIDE SEQUENCE [LARGE SCALE GENOMIC DNA]</scope>
    <source>
        <strain>CMCP6</strain>
    </source>
</reference>
<accession>Q8DCF6</accession>
<proteinExistence type="inferred from homology"/>
<sequence length="309" mass="34208">MTNSLYKKHIISIPELSRAELELIVKTAGQLKAEPNPELIKNKVVASCFFEPSTRTRLSFETAIQRIGGDVIGFDDGGNTSLAKKGETLSDSVQVISNYVDAFVMRHPQEGAARLASEFSNGVPVINAGDGANQHPTQTLLDLFTISETQGRLDNLNVAFVGDLKYGRTVHSLTQALAKFNNIRFFFVAPDALAMPDYILEDLDEAGISYSLHTDMETVIPELDILYMTRVQKERFDESEYAHIKSAYILTAALLEGARENLKVLHPLPRVDEITTDVDKTPHAYYFQQAGNGVYAREALLALVLNESL</sequence>
<keyword id="KW-0665">Pyrimidine biosynthesis</keyword>
<keyword id="KW-0808">Transferase</keyword>
<protein>
    <recommendedName>
        <fullName evidence="1">Aspartate carbamoyltransferase catalytic subunit</fullName>
        <ecNumber evidence="1">2.1.3.2</ecNumber>
    </recommendedName>
    <alternativeName>
        <fullName evidence="1">Aspartate transcarbamylase</fullName>
        <shortName evidence="1">ATCase</shortName>
    </alternativeName>
</protein>
<dbReference type="EC" id="2.1.3.2" evidence="1"/>
<dbReference type="EMBL" id="AE016795">
    <property type="protein sequence ID" value="AAO09904.1"/>
    <property type="molecule type" value="Genomic_DNA"/>
</dbReference>
<dbReference type="RefSeq" id="WP_011079422.1">
    <property type="nucleotide sequence ID" value="NC_004459.3"/>
</dbReference>
<dbReference type="SMR" id="Q8DCF6"/>
<dbReference type="KEGG" id="vvu:VV1_1465"/>
<dbReference type="HOGENOM" id="CLU_043846_1_2_6"/>
<dbReference type="UniPathway" id="UPA00070">
    <property type="reaction ID" value="UER00116"/>
</dbReference>
<dbReference type="Proteomes" id="UP000002275">
    <property type="component" value="Chromosome 1"/>
</dbReference>
<dbReference type="GO" id="GO:0005829">
    <property type="term" value="C:cytosol"/>
    <property type="evidence" value="ECO:0007669"/>
    <property type="project" value="TreeGrafter"/>
</dbReference>
<dbReference type="GO" id="GO:0016597">
    <property type="term" value="F:amino acid binding"/>
    <property type="evidence" value="ECO:0007669"/>
    <property type="project" value="InterPro"/>
</dbReference>
<dbReference type="GO" id="GO:0004070">
    <property type="term" value="F:aspartate carbamoyltransferase activity"/>
    <property type="evidence" value="ECO:0007669"/>
    <property type="project" value="UniProtKB-UniRule"/>
</dbReference>
<dbReference type="GO" id="GO:0006207">
    <property type="term" value="P:'de novo' pyrimidine nucleobase biosynthetic process"/>
    <property type="evidence" value="ECO:0007669"/>
    <property type="project" value="InterPro"/>
</dbReference>
<dbReference type="GO" id="GO:0044205">
    <property type="term" value="P:'de novo' UMP biosynthetic process"/>
    <property type="evidence" value="ECO:0007669"/>
    <property type="project" value="UniProtKB-UniRule"/>
</dbReference>
<dbReference type="GO" id="GO:0006520">
    <property type="term" value="P:amino acid metabolic process"/>
    <property type="evidence" value="ECO:0007669"/>
    <property type="project" value="InterPro"/>
</dbReference>
<dbReference type="FunFam" id="3.40.50.1370:FF:000001">
    <property type="entry name" value="Aspartate carbamoyltransferase"/>
    <property type="match status" value="1"/>
</dbReference>
<dbReference type="FunFam" id="3.40.50.1370:FF:000002">
    <property type="entry name" value="Aspartate carbamoyltransferase 2"/>
    <property type="match status" value="1"/>
</dbReference>
<dbReference type="Gene3D" id="3.40.50.1370">
    <property type="entry name" value="Aspartate/ornithine carbamoyltransferase"/>
    <property type="match status" value="2"/>
</dbReference>
<dbReference type="HAMAP" id="MF_00001">
    <property type="entry name" value="Asp_carb_tr"/>
    <property type="match status" value="1"/>
</dbReference>
<dbReference type="InterPro" id="IPR006132">
    <property type="entry name" value="Asp/Orn_carbamoyltranf_P-bd"/>
</dbReference>
<dbReference type="InterPro" id="IPR006130">
    <property type="entry name" value="Asp/Orn_carbamoylTrfase"/>
</dbReference>
<dbReference type="InterPro" id="IPR036901">
    <property type="entry name" value="Asp/Orn_carbamoylTrfase_sf"/>
</dbReference>
<dbReference type="InterPro" id="IPR002082">
    <property type="entry name" value="Asp_carbamoyltransf"/>
</dbReference>
<dbReference type="InterPro" id="IPR006131">
    <property type="entry name" value="Asp_carbamoyltransf_Asp/Orn-bd"/>
</dbReference>
<dbReference type="NCBIfam" id="TIGR00670">
    <property type="entry name" value="asp_carb_tr"/>
    <property type="match status" value="1"/>
</dbReference>
<dbReference type="NCBIfam" id="NF002032">
    <property type="entry name" value="PRK00856.1"/>
    <property type="match status" value="1"/>
</dbReference>
<dbReference type="PANTHER" id="PTHR45753:SF6">
    <property type="entry name" value="ASPARTATE CARBAMOYLTRANSFERASE"/>
    <property type="match status" value="1"/>
</dbReference>
<dbReference type="PANTHER" id="PTHR45753">
    <property type="entry name" value="ORNITHINE CARBAMOYLTRANSFERASE, MITOCHONDRIAL"/>
    <property type="match status" value="1"/>
</dbReference>
<dbReference type="Pfam" id="PF00185">
    <property type="entry name" value="OTCace"/>
    <property type="match status" value="1"/>
</dbReference>
<dbReference type="Pfam" id="PF02729">
    <property type="entry name" value="OTCace_N"/>
    <property type="match status" value="1"/>
</dbReference>
<dbReference type="PRINTS" id="PR00100">
    <property type="entry name" value="AOTCASE"/>
</dbReference>
<dbReference type="PRINTS" id="PR00101">
    <property type="entry name" value="ATCASE"/>
</dbReference>
<dbReference type="SUPFAM" id="SSF53671">
    <property type="entry name" value="Aspartate/ornithine carbamoyltransferase"/>
    <property type="match status" value="1"/>
</dbReference>
<dbReference type="PROSITE" id="PS00097">
    <property type="entry name" value="CARBAMOYLTRANSFERASE"/>
    <property type="match status" value="1"/>
</dbReference>
<comment type="function">
    <text evidence="1">Catalyzes the condensation of carbamoyl phosphate and aspartate to form carbamoyl aspartate and inorganic phosphate, the committed step in the de novo pyrimidine nucleotide biosynthesis pathway.</text>
</comment>
<comment type="catalytic activity">
    <reaction evidence="1">
        <text>carbamoyl phosphate + L-aspartate = N-carbamoyl-L-aspartate + phosphate + H(+)</text>
        <dbReference type="Rhea" id="RHEA:20013"/>
        <dbReference type="ChEBI" id="CHEBI:15378"/>
        <dbReference type="ChEBI" id="CHEBI:29991"/>
        <dbReference type="ChEBI" id="CHEBI:32814"/>
        <dbReference type="ChEBI" id="CHEBI:43474"/>
        <dbReference type="ChEBI" id="CHEBI:58228"/>
        <dbReference type="EC" id="2.1.3.2"/>
    </reaction>
</comment>
<comment type="pathway">
    <text evidence="1">Pyrimidine metabolism; UMP biosynthesis via de novo pathway; (S)-dihydroorotate from bicarbonate: step 2/3.</text>
</comment>
<comment type="subunit">
    <text evidence="1">Heterododecamer (2C3:3R2) of six catalytic PyrB chains organized as two trimers (C3), and six regulatory PyrI chains organized as three dimers (R2).</text>
</comment>
<comment type="similarity">
    <text evidence="1">Belongs to the aspartate/ornithine carbamoyltransferase superfamily. ATCase family.</text>
</comment>
<organism>
    <name type="scientific">Vibrio vulnificus (strain CMCP6)</name>
    <dbReference type="NCBI Taxonomy" id="216895"/>
    <lineage>
        <taxon>Bacteria</taxon>
        <taxon>Pseudomonadati</taxon>
        <taxon>Pseudomonadota</taxon>
        <taxon>Gammaproteobacteria</taxon>
        <taxon>Vibrionales</taxon>
        <taxon>Vibrionaceae</taxon>
        <taxon>Vibrio</taxon>
    </lineage>
</organism>
<feature type="chain" id="PRO_0000113226" description="Aspartate carbamoyltransferase catalytic subunit">
    <location>
        <begin position="1"/>
        <end position="309"/>
    </location>
</feature>
<feature type="binding site" evidence="1">
    <location>
        <position position="55"/>
    </location>
    <ligand>
        <name>carbamoyl phosphate</name>
        <dbReference type="ChEBI" id="CHEBI:58228"/>
    </ligand>
</feature>
<feature type="binding site" evidence="1">
    <location>
        <position position="56"/>
    </location>
    <ligand>
        <name>carbamoyl phosphate</name>
        <dbReference type="ChEBI" id="CHEBI:58228"/>
    </ligand>
</feature>
<feature type="binding site" evidence="1">
    <location>
        <position position="85"/>
    </location>
    <ligand>
        <name>L-aspartate</name>
        <dbReference type="ChEBI" id="CHEBI:29991"/>
    </ligand>
</feature>
<feature type="binding site" evidence="1">
    <location>
        <position position="106"/>
    </location>
    <ligand>
        <name>carbamoyl phosphate</name>
        <dbReference type="ChEBI" id="CHEBI:58228"/>
    </ligand>
</feature>
<feature type="binding site" evidence="1">
    <location>
        <position position="135"/>
    </location>
    <ligand>
        <name>carbamoyl phosphate</name>
        <dbReference type="ChEBI" id="CHEBI:58228"/>
    </ligand>
</feature>
<feature type="binding site" evidence="1">
    <location>
        <position position="138"/>
    </location>
    <ligand>
        <name>carbamoyl phosphate</name>
        <dbReference type="ChEBI" id="CHEBI:58228"/>
    </ligand>
</feature>
<feature type="binding site" evidence="1">
    <location>
        <position position="168"/>
    </location>
    <ligand>
        <name>L-aspartate</name>
        <dbReference type="ChEBI" id="CHEBI:29991"/>
    </ligand>
</feature>
<feature type="binding site" evidence="1">
    <location>
        <position position="230"/>
    </location>
    <ligand>
        <name>L-aspartate</name>
        <dbReference type="ChEBI" id="CHEBI:29991"/>
    </ligand>
</feature>
<feature type="binding site" evidence="1">
    <location>
        <position position="268"/>
    </location>
    <ligand>
        <name>carbamoyl phosphate</name>
        <dbReference type="ChEBI" id="CHEBI:58228"/>
    </ligand>
</feature>
<feature type="binding site" evidence="1">
    <location>
        <position position="269"/>
    </location>
    <ligand>
        <name>carbamoyl phosphate</name>
        <dbReference type="ChEBI" id="CHEBI:58228"/>
    </ligand>
</feature>
<gene>
    <name evidence="1" type="primary">pyrB</name>
    <name type="ordered locus">VV1_1465</name>
</gene>
<evidence type="ECO:0000255" key="1">
    <source>
        <dbReference type="HAMAP-Rule" id="MF_00001"/>
    </source>
</evidence>